<dbReference type="EMBL" id="L00604">
    <property type="protein sequence ID" value="AAA25820.1"/>
    <property type="molecule type" value="Genomic_DNA"/>
</dbReference>
<dbReference type="EMBL" id="AF050676">
    <property type="protein sequence ID" value="AAC05679.1"/>
    <property type="molecule type" value="Genomic_DNA"/>
</dbReference>
<dbReference type="EMBL" id="AE004091">
    <property type="protein sequence ID" value="AAG08150.1"/>
    <property type="molecule type" value="Genomic_DNA"/>
</dbReference>
<dbReference type="PIR" id="A40622">
    <property type="entry name" value="A40622"/>
</dbReference>
<dbReference type="RefSeq" id="NP_253452.1">
    <property type="nucleotide sequence ID" value="NC_002516.2"/>
</dbReference>
<dbReference type="RefSeq" id="WP_003095216.1">
    <property type="nucleotide sequence ID" value="NZ_QZGE01000018.1"/>
</dbReference>
<dbReference type="PDB" id="1MZB">
    <property type="method" value="X-ray"/>
    <property type="resolution" value="1.80 A"/>
    <property type="chains" value="A=1-134"/>
</dbReference>
<dbReference type="PDB" id="6H1C">
    <property type="method" value="X-ray"/>
    <property type="resolution" value="2.34 A"/>
    <property type="chains" value="A/B=1-134"/>
</dbReference>
<dbReference type="PDBsum" id="1MZB"/>
<dbReference type="PDBsum" id="6H1C"/>
<dbReference type="SMR" id="Q03456"/>
<dbReference type="FunCoup" id="Q03456">
    <property type="interactions" value="757"/>
</dbReference>
<dbReference type="STRING" id="208964.PA4764"/>
<dbReference type="PaxDb" id="208964-PA4764"/>
<dbReference type="DNASU" id="881780"/>
<dbReference type="GeneID" id="881780"/>
<dbReference type="KEGG" id="pae:PA4764"/>
<dbReference type="PATRIC" id="fig|208964.12.peg.4991"/>
<dbReference type="PseudoCAP" id="PA4764"/>
<dbReference type="HOGENOM" id="CLU_096072_3_3_6"/>
<dbReference type="InParanoid" id="Q03456"/>
<dbReference type="OrthoDB" id="8659436at2"/>
<dbReference type="PhylomeDB" id="Q03456"/>
<dbReference type="BioCyc" id="PAER208964:G1FZ6-4877-MONOMER"/>
<dbReference type="EvolutionaryTrace" id="Q03456"/>
<dbReference type="PHI-base" id="PHI:8065"/>
<dbReference type="Proteomes" id="UP000002438">
    <property type="component" value="Chromosome"/>
</dbReference>
<dbReference type="CollecTF" id="EXPREG_00000c80"/>
<dbReference type="GO" id="GO:0005829">
    <property type="term" value="C:cytosol"/>
    <property type="evidence" value="ECO:0000318"/>
    <property type="project" value="GO_Central"/>
</dbReference>
<dbReference type="GO" id="GO:0032993">
    <property type="term" value="C:protein-DNA complex"/>
    <property type="evidence" value="ECO:0000353"/>
    <property type="project" value="CollecTF"/>
</dbReference>
<dbReference type="GO" id="GO:0003700">
    <property type="term" value="F:DNA-binding transcription factor activity"/>
    <property type="evidence" value="ECO:0000318"/>
    <property type="project" value="GO_Central"/>
</dbReference>
<dbReference type="GO" id="GO:0001217">
    <property type="term" value="F:DNA-binding transcription repressor activity"/>
    <property type="evidence" value="ECO:0000353"/>
    <property type="project" value="CollecTF"/>
</dbReference>
<dbReference type="GO" id="GO:0008198">
    <property type="term" value="F:ferrous iron binding"/>
    <property type="evidence" value="ECO:0000304"/>
    <property type="project" value="PseudoCAP"/>
</dbReference>
<dbReference type="GO" id="GO:0000976">
    <property type="term" value="F:transcription cis-regulatory region binding"/>
    <property type="evidence" value="ECO:0000353"/>
    <property type="project" value="CollecTF"/>
</dbReference>
<dbReference type="GO" id="GO:0008270">
    <property type="term" value="F:zinc ion binding"/>
    <property type="evidence" value="ECO:0000318"/>
    <property type="project" value="GO_Central"/>
</dbReference>
<dbReference type="GO" id="GO:0045892">
    <property type="term" value="P:negative regulation of DNA-templated transcription"/>
    <property type="evidence" value="ECO:0000270"/>
    <property type="project" value="CollecTF"/>
</dbReference>
<dbReference type="GO" id="GO:1900705">
    <property type="term" value="P:negative regulation of siderophore biosynthetic process"/>
    <property type="evidence" value="ECO:0000315"/>
    <property type="project" value="PseudoCAP"/>
</dbReference>
<dbReference type="GO" id="GO:0019290">
    <property type="term" value="P:siderophore biosynthetic process"/>
    <property type="evidence" value="ECO:0000315"/>
    <property type="project" value="CACAO"/>
</dbReference>
<dbReference type="CDD" id="cd07153">
    <property type="entry name" value="Fur_like"/>
    <property type="match status" value="1"/>
</dbReference>
<dbReference type="FunFam" id="1.10.10.10:FF:000007">
    <property type="entry name" value="Ferric uptake regulation protein"/>
    <property type="match status" value="1"/>
</dbReference>
<dbReference type="FunFam" id="3.30.1490.190:FF:000001">
    <property type="entry name" value="Ferric uptake regulation protein"/>
    <property type="match status" value="1"/>
</dbReference>
<dbReference type="Gene3D" id="3.30.1490.190">
    <property type="match status" value="1"/>
</dbReference>
<dbReference type="Gene3D" id="1.10.10.10">
    <property type="entry name" value="Winged helix-like DNA-binding domain superfamily/Winged helix DNA-binding domain"/>
    <property type="match status" value="1"/>
</dbReference>
<dbReference type="InterPro" id="IPR002481">
    <property type="entry name" value="FUR"/>
</dbReference>
<dbReference type="InterPro" id="IPR043135">
    <property type="entry name" value="Fur_C"/>
</dbReference>
<dbReference type="InterPro" id="IPR036388">
    <property type="entry name" value="WH-like_DNA-bd_sf"/>
</dbReference>
<dbReference type="InterPro" id="IPR036390">
    <property type="entry name" value="WH_DNA-bd_sf"/>
</dbReference>
<dbReference type="NCBIfam" id="NF006999">
    <property type="entry name" value="PRK09462.1"/>
    <property type="match status" value="1"/>
</dbReference>
<dbReference type="PANTHER" id="PTHR33202:SF2">
    <property type="entry name" value="FERRIC UPTAKE REGULATION PROTEIN"/>
    <property type="match status" value="1"/>
</dbReference>
<dbReference type="PANTHER" id="PTHR33202">
    <property type="entry name" value="ZINC UPTAKE REGULATION PROTEIN"/>
    <property type="match status" value="1"/>
</dbReference>
<dbReference type="Pfam" id="PF01475">
    <property type="entry name" value="FUR"/>
    <property type="match status" value="1"/>
</dbReference>
<dbReference type="SUPFAM" id="SSF46785">
    <property type="entry name" value="Winged helix' DNA-binding domain"/>
    <property type="match status" value="1"/>
</dbReference>
<protein>
    <recommendedName>
        <fullName>Ferric uptake regulation protein</fullName>
        <shortName>Ferric uptake regulator</shortName>
    </recommendedName>
</protein>
<keyword id="KW-0002">3D-structure</keyword>
<keyword id="KW-0963">Cytoplasm</keyword>
<keyword id="KW-0238">DNA-binding</keyword>
<keyword id="KW-0408">Iron</keyword>
<keyword id="KW-0479">Metal-binding</keyword>
<keyword id="KW-1185">Reference proteome</keyword>
<keyword id="KW-0678">Repressor</keyword>
<keyword id="KW-0804">Transcription</keyword>
<keyword id="KW-0805">Transcription regulation</keyword>
<keyword id="KW-0862">Zinc</keyword>
<reference key="1">
    <citation type="journal article" date="1993" name="J. Bacteriol.">
        <title>Coordinate regulation of siderophore and exotoxin A production: molecular cloning and sequencing of the Pseudomonas aeruginosa fur gene.</title>
        <authorList>
            <person name="Prince R.W."/>
            <person name="Cox C.D."/>
            <person name="Vasil M.L."/>
        </authorList>
    </citation>
    <scope>NUCLEOTIDE SEQUENCE [GENOMIC DNA]</scope>
    <source>
        <strain>ATCC 29260 / PA103</strain>
    </source>
</reference>
<reference key="2">
    <citation type="journal article" date="1998" name="J. Bacteriol.">
        <title>The fur-regulated gene encoding the alternative sigma factor PvdS is required for iron-dependent expression of the LysR-type regulator ptxR in Pseudomonas aeruginosa.</title>
        <authorList>
            <person name="Vasil M.L."/>
            <person name="Ochsner U.A."/>
            <person name="Johnson Z."/>
            <person name="Colmer J.A."/>
            <person name="Hamood A.N."/>
        </authorList>
    </citation>
    <scope>NUCLEOTIDE SEQUENCE [GENOMIC DNA]</scope>
    <source>
        <strain>ATCC 15692 / DSM 22644 / CIP 104116 / JCM 14847 / LMG 12228 / 1C / PRS 101 / PAO1</strain>
    </source>
</reference>
<reference key="3">
    <citation type="journal article" date="2000" name="Nature">
        <title>Complete genome sequence of Pseudomonas aeruginosa PAO1, an opportunistic pathogen.</title>
        <authorList>
            <person name="Stover C.K."/>
            <person name="Pham X.-Q.T."/>
            <person name="Erwin A.L."/>
            <person name="Mizoguchi S.D."/>
            <person name="Warrener P."/>
            <person name="Hickey M.J."/>
            <person name="Brinkman F.S.L."/>
            <person name="Hufnagle W.O."/>
            <person name="Kowalik D.J."/>
            <person name="Lagrou M."/>
            <person name="Garber R.L."/>
            <person name="Goltry L."/>
            <person name="Tolentino E."/>
            <person name="Westbrock-Wadman S."/>
            <person name="Yuan Y."/>
            <person name="Brody L.L."/>
            <person name="Coulter S.N."/>
            <person name="Folger K.R."/>
            <person name="Kas A."/>
            <person name="Larbig K."/>
            <person name="Lim R.M."/>
            <person name="Smith K.A."/>
            <person name="Spencer D.H."/>
            <person name="Wong G.K.-S."/>
            <person name="Wu Z."/>
            <person name="Paulsen I.T."/>
            <person name="Reizer J."/>
            <person name="Saier M.H. Jr."/>
            <person name="Hancock R.E.W."/>
            <person name="Lory S."/>
            <person name="Olson M.V."/>
        </authorList>
    </citation>
    <scope>NUCLEOTIDE SEQUENCE [LARGE SCALE GENOMIC DNA]</scope>
    <source>
        <strain>ATCC 15692 / DSM 22644 / CIP 104116 / JCM 14847 / LMG 12228 / 1C / PRS 101 / PAO1</strain>
    </source>
</reference>
<reference key="4">
    <citation type="journal article" date="2003" name="Mol. Microbiol.">
        <title>Architecture of a protein central to iron homeostasis: crystal structure and spectroscopic analysis of the ferric uptake regulator.</title>
        <authorList>
            <person name="Pohl E."/>
            <person name="Haller J.C."/>
            <person name="Mijovilovich A."/>
            <person name="Meyer-Klaucke W."/>
            <person name="Garman E."/>
            <person name="Vasil M.L."/>
        </authorList>
    </citation>
    <scope>X-RAY CRYSTALLOGRAPHY (1.8 ANGSTROMS)</scope>
    <scope>SUBUNIT</scope>
    <scope>METAL-BINDING SITES</scope>
</reference>
<sequence>MVENSELRKAGLKVTLPRVKILQMLDSAEQRHMSAEDVYKALMEAGEDVGLATVYRVLTQFEAAGLVVRHNFDGGHAVFELADSGHHDHMVCVDTGEVIEFMDAEIEKRQKEIVRERGFELVDHNLVLYVRKKK</sequence>
<evidence type="ECO:0000250" key="1"/>
<evidence type="ECO:0000269" key="2">
    <source>
    </source>
</evidence>
<evidence type="ECO:0000305" key="3"/>
<evidence type="ECO:0007829" key="4">
    <source>
        <dbReference type="PDB" id="1MZB"/>
    </source>
</evidence>
<evidence type="ECO:0007829" key="5">
    <source>
        <dbReference type="PDB" id="6H1C"/>
    </source>
</evidence>
<gene>
    <name type="primary">fur</name>
    <name type="ordered locus">PA4764</name>
</gene>
<feature type="chain" id="PRO_0000095567" description="Ferric uptake regulation protein">
    <location>
        <begin position="1"/>
        <end position="134"/>
    </location>
</feature>
<feature type="region of interest" description="DNA-binding">
    <location>
        <begin position="1"/>
        <end position="83"/>
    </location>
</feature>
<feature type="region of interest" description="Dimerization">
    <location>
        <begin position="84"/>
        <end position="134"/>
    </location>
</feature>
<feature type="binding site">
    <location>
        <position position="32"/>
    </location>
    <ligand>
        <name>Zn(2+)</name>
        <dbReference type="ChEBI" id="CHEBI:29105"/>
    </ligand>
</feature>
<feature type="binding site">
    <location>
        <position position="80"/>
    </location>
    <ligand>
        <name>Zn(2+)</name>
        <dbReference type="ChEBI" id="CHEBI:29105"/>
    </ligand>
</feature>
<feature type="binding site" evidence="3">
    <location>
        <position position="86"/>
    </location>
    <ligand>
        <name>Fe cation</name>
        <dbReference type="ChEBI" id="CHEBI:24875"/>
    </ligand>
</feature>
<feature type="binding site" evidence="3">
    <location>
        <position position="88"/>
    </location>
    <ligand>
        <name>Fe cation</name>
        <dbReference type="ChEBI" id="CHEBI:24875"/>
    </ligand>
</feature>
<feature type="binding site">
    <location>
        <position position="89"/>
    </location>
    <ligand>
        <name>Zn(2+)</name>
        <dbReference type="ChEBI" id="CHEBI:29105"/>
    </ligand>
</feature>
<feature type="binding site">
    <location>
        <position position="100"/>
    </location>
    <ligand>
        <name>Zn(2+)</name>
        <dbReference type="ChEBI" id="CHEBI:29105"/>
    </ligand>
</feature>
<feature type="binding site" evidence="3">
    <location>
        <position position="107"/>
    </location>
    <ligand>
        <name>Fe cation</name>
        <dbReference type="ChEBI" id="CHEBI:24875"/>
    </ligand>
</feature>
<feature type="binding site" evidence="3">
    <location>
        <position position="124"/>
    </location>
    <ligand>
        <name>Fe cation</name>
        <dbReference type="ChEBI" id="CHEBI:24875"/>
    </ligand>
</feature>
<feature type="helix" evidence="4">
    <location>
        <begin position="2"/>
        <end position="9"/>
    </location>
</feature>
<feature type="helix" evidence="4">
    <location>
        <begin position="16"/>
        <end position="26"/>
    </location>
</feature>
<feature type="turn" evidence="5">
    <location>
        <begin position="27"/>
        <end position="30"/>
    </location>
</feature>
<feature type="helix" evidence="4">
    <location>
        <begin position="35"/>
        <end position="44"/>
    </location>
</feature>
<feature type="helix" evidence="4">
    <location>
        <begin position="51"/>
        <end position="63"/>
    </location>
</feature>
<feature type="strand" evidence="4">
    <location>
        <begin position="66"/>
        <end position="70"/>
    </location>
</feature>
<feature type="strand" evidence="4">
    <location>
        <begin position="72"/>
        <end position="76"/>
    </location>
</feature>
<feature type="strand" evidence="4">
    <location>
        <begin position="78"/>
        <end position="84"/>
    </location>
</feature>
<feature type="strand" evidence="4">
    <location>
        <begin position="88"/>
        <end position="92"/>
    </location>
</feature>
<feature type="turn" evidence="4">
    <location>
        <begin position="93"/>
        <end position="95"/>
    </location>
</feature>
<feature type="strand" evidence="4">
    <location>
        <begin position="98"/>
        <end position="101"/>
    </location>
</feature>
<feature type="helix" evidence="4">
    <location>
        <begin position="104"/>
        <end position="115"/>
    </location>
</feature>
<feature type="turn" evidence="4">
    <location>
        <begin position="116"/>
        <end position="118"/>
    </location>
</feature>
<feature type="strand" evidence="4">
    <location>
        <begin position="127"/>
        <end position="130"/>
    </location>
</feature>
<proteinExistence type="evidence at protein level"/>
<organism>
    <name type="scientific">Pseudomonas aeruginosa (strain ATCC 15692 / DSM 22644 / CIP 104116 / JCM 14847 / LMG 12228 / 1C / PRS 101 / PAO1)</name>
    <dbReference type="NCBI Taxonomy" id="208964"/>
    <lineage>
        <taxon>Bacteria</taxon>
        <taxon>Pseudomonadati</taxon>
        <taxon>Pseudomonadota</taxon>
        <taxon>Gammaproteobacteria</taxon>
        <taxon>Pseudomonadales</taxon>
        <taxon>Pseudomonadaceae</taxon>
        <taxon>Pseudomonas</taxon>
    </lineage>
</organism>
<comment type="function">
    <text>Fur acts as a repressor, employing Fe(2+) as a cofactor to bind the operator of the iron transport operon. Involved in exotoxin A regulation, siderophore regulation and manganese susceptibility.</text>
</comment>
<comment type="subunit">
    <text evidence="2">Homodimer.</text>
</comment>
<comment type="subcellular location">
    <subcellularLocation>
        <location evidence="1">Cytoplasm</location>
    </subcellularLocation>
</comment>
<comment type="similarity">
    <text evidence="3">Belongs to the Fur family.</text>
</comment>
<accession>Q03456</accession>
<name>FUR_PSEAE</name>